<reference key="1">
    <citation type="submission" date="2005-06" db="EMBL/GenBank/DDBJ databases">
        <title>AtNHX8/SOS1b, a member of the monovalent cation:proton antiporter-1 family from Arabidopsis thaliana, encodes a putative plasma membrane Li(+)/H(+) antiporter.</title>
        <authorList>
            <person name="An R."/>
            <person name="Chen Q.-J."/>
            <person name="Wang X.-C."/>
        </authorList>
    </citation>
    <scope>NUCLEOTIDE SEQUENCE [MRNA]</scope>
</reference>
<reference key="2">
    <citation type="journal article" date="2000" name="Nature">
        <title>Sequence and analysis of chromosome 1 of the plant Arabidopsis thaliana.</title>
        <authorList>
            <person name="Theologis A."/>
            <person name="Ecker J.R."/>
            <person name="Palm C.J."/>
            <person name="Federspiel N.A."/>
            <person name="Kaul S."/>
            <person name="White O."/>
            <person name="Alonso J."/>
            <person name="Altafi H."/>
            <person name="Araujo R."/>
            <person name="Bowman C.L."/>
            <person name="Brooks S.Y."/>
            <person name="Buehler E."/>
            <person name="Chan A."/>
            <person name="Chao Q."/>
            <person name="Chen H."/>
            <person name="Cheuk R.F."/>
            <person name="Chin C.W."/>
            <person name="Chung M.K."/>
            <person name="Conn L."/>
            <person name="Conway A.B."/>
            <person name="Conway A.R."/>
            <person name="Creasy T.H."/>
            <person name="Dewar K."/>
            <person name="Dunn P."/>
            <person name="Etgu P."/>
            <person name="Feldblyum T.V."/>
            <person name="Feng J.-D."/>
            <person name="Fong B."/>
            <person name="Fujii C.Y."/>
            <person name="Gill J.E."/>
            <person name="Goldsmith A.D."/>
            <person name="Haas B."/>
            <person name="Hansen N.F."/>
            <person name="Hughes B."/>
            <person name="Huizar L."/>
            <person name="Hunter J.L."/>
            <person name="Jenkins J."/>
            <person name="Johnson-Hopson C."/>
            <person name="Khan S."/>
            <person name="Khaykin E."/>
            <person name="Kim C.J."/>
            <person name="Koo H.L."/>
            <person name="Kremenetskaia I."/>
            <person name="Kurtz D.B."/>
            <person name="Kwan A."/>
            <person name="Lam B."/>
            <person name="Langin-Hooper S."/>
            <person name="Lee A."/>
            <person name="Lee J.M."/>
            <person name="Lenz C.A."/>
            <person name="Li J.H."/>
            <person name="Li Y.-P."/>
            <person name="Lin X."/>
            <person name="Liu S.X."/>
            <person name="Liu Z.A."/>
            <person name="Luros J.S."/>
            <person name="Maiti R."/>
            <person name="Marziali A."/>
            <person name="Militscher J."/>
            <person name="Miranda M."/>
            <person name="Nguyen M."/>
            <person name="Nierman W.C."/>
            <person name="Osborne B.I."/>
            <person name="Pai G."/>
            <person name="Peterson J."/>
            <person name="Pham P.K."/>
            <person name="Rizzo M."/>
            <person name="Rooney T."/>
            <person name="Rowley D."/>
            <person name="Sakano H."/>
            <person name="Salzberg S.L."/>
            <person name="Schwartz J.R."/>
            <person name="Shinn P."/>
            <person name="Southwick A.M."/>
            <person name="Sun H."/>
            <person name="Tallon L.J."/>
            <person name="Tambunga G."/>
            <person name="Toriumi M.J."/>
            <person name="Town C.D."/>
            <person name="Utterback T."/>
            <person name="Van Aken S."/>
            <person name="Vaysberg M."/>
            <person name="Vysotskaia V.S."/>
            <person name="Walker M."/>
            <person name="Wu D."/>
            <person name="Yu G."/>
            <person name="Fraser C.M."/>
            <person name="Venter J.C."/>
            <person name="Davis R.W."/>
        </authorList>
    </citation>
    <scope>NUCLEOTIDE SEQUENCE [LARGE SCALE GENOMIC DNA]</scope>
    <source>
        <strain>cv. Columbia</strain>
    </source>
</reference>
<reference key="3">
    <citation type="journal article" date="2017" name="Plant J.">
        <title>Araport11: a complete reannotation of the Arabidopsis thaliana reference genome.</title>
        <authorList>
            <person name="Cheng C.Y."/>
            <person name="Krishnakumar V."/>
            <person name="Chan A.P."/>
            <person name="Thibaud-Nissen F."/>
            <person name="Schobel S."/>
            <person name="Town C.D."/>
        </authorList>
    </citation>
    <scope>GENOME REANNOTATION</scope>
    <source>
        <strain>cv. Columbia</strain>
    </source>
</reference>
<accession>Q3YL57</accession>
<accession>Q9LQW7</accession>
<accession>Q9MA19</accession>
<organism>
    <name type="scientific">Arabidopsis thaliana</name>
    <name type="common">Mouse-ear cress</name>
    <dbReference type="NCBI Taxonomy" id="3702"/>
    <lineage>
        <taxon>Eukaryota</taxon>
        <taxon>Viridiplantae</taxon>
        <taxon>Streptophyta</taxon>
        <taxon>Embryophyta</taxon>
        <taxon>Tracheophyta</taxon>
        <taxon>Spermatophyta</taxon>
        <taxon>Magnoliopsida</taxon>
        <taxon>eudicotyledons</taxon>
        <taxon>Gunneridae</taxon>
        <taxon>Pentapetalae</taxon>
        <taxon>rosids</taxon>
        <taxon>malvids</taxon>
        <taxon>Brassicales</taxon>
        <taxon>Brassicaceae</taxon>
        <taxon>Camelineae</taxon>
        <taxon>Arabidopsis</taxon>
    </lineage>
</organism>
<sequence length="756" mass="83476">MTSIIGAALPYKSPEKAIASSSYSAENDSSPVDAVIFAGTSLVLGTACRYLFNGTRVPYTVVLLVIGIFLGSLEYGTKHNLGKLGHGIRIWNGINPDLLLAVFLPVLLFESSFSMDVHQIKRCMGQMVLLAGPGVLISTFCLGALIKLTFPYNWDWKTSLLLGGLLGATDPVAVVALLKELGASKKMTTLIDGESLMNDGVSVVVFQLFFKMVMGHNSDWGSIIKFLVQNSFGAVGIGLAFGIASVFWLKFIFNDTVAQITVTLSASYFAYYTAQEWAGVSGILTVMILGMFFAAFARTAFKGDSHQSLHHFWEMAAYIANTLVFMLSGVIIAESVLSGQTISYKGNSWSFLFLLYLYVQLSRCVVVGVLYPLLCRSGYGLDWKESIILTWSGLRGAVSLSLALSVKQSSGNSYLSSDTGTRFLFLTGGIVFLTLVVNGSTTQLLLHLLRMDTLTATKKRILEYTKFEMMKTALKAFENLGDDEELGSADWPTVIRHISSLKDLEGRQVNPHDGYEAGSLDPTNIMDIRIRFLNGVQAAYWEMLDDGRITQCTANVLMQSVDEALDLVSTSSLSDWRGLEPRVHFPNYYKFLQSKIIPHKLVTHLIVERLESACYISSAFLRAHRIARQQLHIFLGNSNIASTVINESEVEGEEAKQFLEDVRDSFPQVLSVLKTRQVTHYVLNHLNGYIKNLEKVGLLEGKEVSHLHDVVQSDLKKLLRHPPSLKLPNVDDLITSNPLLKDRSSFRSLAIGETDA</sequence>
<protein>
    <recommendedName>
        <fullName>Sodium/hydrogen exchanger 8</fullName>
    </recommendedName>
    <alternativeName>
        <fullName>Na(+)/H(+) exchanger 8</fullName>
        <shortName>NHE-8</shortName>
    </alternativeName>
    <alternativeName>
        <fullName>Protein SALT OVERLY SENSITIVE 1B</fullName>
    </alternativeName>
</protein>
<name>NHX8_ARATH</name>
<proteinExistence type="evidence at transcript level"/>
<evidence type="ECO:0000250" key="1">
    <source>
        <dbReference type="UniProtKB" id="Q68KI4"/>
    </source>
</evidence>
<evidence type="ECO:0000255" key="2"/>
<evidence type="ECO:0000305" key="3"/>
<feature type="chain" id="PRO_0000052379" description="Sodium/hydrogen exchanger 8">
    <location>
        <begin position="1"/>
        <end position="756"/>
    </location>
</feature>
<feature type="topological domain" description="Extracellular" evidence="2">
    <location>
        <begin position="1"/>
        <end position="31"/>
    </location>
</feature>
<feature type="transmembrane region" description="Helical" evidence="2">
    <location>
        <begin position="32"/>
        <end position="52"/>
    </location>
</feature>
<feature type="topological domain" description="Cytoplasmic" evidence="2">
    <location>
        <begin position="53"/>
        <end position="56"/>
    </location>
</feature>
<feature type="transmembrane region" description="Helical" evidence="2">
    <location>
        <begin position="57"/>
        <end position="77"/>
    </location>
</feature>
<feature type="topological domain" description="Extracellular" evidence="2">
    <location>
        <begin position="78"/>
        <end position="89"/>
    </location>
</feature>
<feature type="transmembrane region" description="Helical" evidence="2">
    <location>
        <begin position="90"/>
        <end position="110"/>
    </location>
</feature>
<feature type="topological domain" description="Cytoplasmic" evidence="2">
    <location>
        <begin position="111"/>
        <end position="125"/>
    </location>
</feature>
<feature type="transmembrane region" description="Helical" evidence="2">
    <location>
        <begin position="126"/>
        <end position="146"/>
    </location>
</feature>
<feature type="topological domain" description="Extracellular" evidence="2">
    <location>
        <begin position="147"/>
        <end position="157"/>
    </location>
</feature>
<feature type="transmembrane region" description="Helical" evidence="2">
    <location>
        <begin position="158"/>
        <end position="178"/>
    </location>
</feature>
<feature type="topological domain" description="Cytoplasmic" evidence="2">
    <location>
        <begin position="179"/>
        <end position="194"/>
    </location>
</feature>
<feature type="transmembrane region" description="Helical" evidence="2">
    <location>
        <begin position="195"/>
        <end position="215"/>
    </location>
</feature>
<feature type="topological domain" description="Extracellular" evidence="2">
    <location>
        <begin position="216"/>
        <end position="225"/>
    </location>
</feature>
<feature type="transmembrane region" description="Helical" evidence="2">
    <location>
        <begin position="226"/>
        <end position="248"/>
    </location>
</feature>
<feature type="topological domain" description="Cytoplasmic" evidence="2">
    <location>
        <begin position="249"/>
        <end position="251"/>
    </location>
</feature>
<feature type="transmembrane region" description="Helical" evidence="2">
    <location>
        <begin position="252"/>
        <end position="271"/>
    </location>
</feature>
<feature type="topological domain" description="Extracellular" evidence="2">
    <location>
        <begin position="272"/>
        <end position="276"/>
    </location>
</feature>
<feature type="transmembrane region" description="Helical" evidence="2">
    <location>
        <begin position="277"/>
        <end position="297"/>
    </location>
</feature>
<feature type="topological domain" description="Cytoplasmic" evidence="2">
    <location>
        <begin position="298"/>
        <end position="311"/>
    </location>
</feature>
<feature type="transmembrane region" description="Helical" evidence="2">
    <location>
        <begin position="312"/>
        <end position="332"/>
    </location>
</feature>
<feature type="topological domain" description="Extracellular" evidence="2">
    <location>
        <begin position="333"/>
        <end position="350"/>
    </location>
</feature>
<feature type="transmembrane region" description="Helical" evidence="2">
    <location>
        <begin position="351"/>
        <end position="371"/>
    </location>
</feature>
<feature type="topological domain" description="Cytoplasmic" evidence="2">
    <location>
        <begin position="372"/>
        <end position="385"/>
    </location>
</feature>
<feature type="transmembrane region" description="Helical" evidence="2">
    <location>
        <begin position="386"/>
        <end position="406"/>
    </location>
</feature>
<feature type="topological domain" description="Extracellular" evidence="2">
    <location>
        <begin position="407"/>
        <end position="422"/>
    </location>
</feature>
<feature type="transmembrane region" description="Helical" evidence="2">
    <location>
        <begin position="423"/>
        <end position="443"/>
    </location>
</feature>
<feature type="topological domain" description="Cytoplasmic" evidence="2">
    <location>
        <begin position="444"/>
        <end position="756"/>
    </location>
</feature>
<feature type="glycosylation site" description="N-linked (GlcNAc...) asparagine" evidence="2">
    <location>
        <position position="27"/>
    </location>
</feature>
<comment type="function">
    <text evidence="1">May act in low affinity electroneutral exchange of protons for cations such as Na(+) or K(+) across membranes. May also exchange Li(+) and Cs(+) with a lower affinity.</text>
</comment>
<comment type="catalytic activity">
    <reaction evidence="1">
        <text>Na(+)(in) + H(+)(out) = Na(+)(out) + H(+)(in)</text>
        <dbReference type="Rhea" id="RHEA:29419"/>
        <dbReference type="ChEBI" id="CHEBI:15378"/>
        <dbReference type="ChEBI" id="CHEBI:29101"/>
    </reaction>
</comment>
<comment type="catalytic activity">
    <reaction evidence="1">
        <text>K(+)(in) + H(+)(out) = K(+)(out) + H(+)(in)</text>
        <dbReference type="Rhea" id="RHEA:29467"/>
        <dbReference type="ChEBI" id="CHEBI:15378"/>
        <dbReference type="ChEBI" id="CHEBI:29103"/>
    </reaction>
</comment>
<comment type="subcellular location">
    <subcellularLocation>
        <location evidence="1">Cell membrane</location>
        <topology evidence="2">Multi-pass membrane protein</topology>
    </subcellularLocation>
</comment>
<comment type="alternative products">
    <event type="alternative splicing"/>
    <isoform>
        <id>Q3YL57-1</id>
        <name>1</name>
        <sequence type="displayed"/>
    </isoform>
    <text>A number of isoforms are produced. According to EST sequences.</text>
</comment>
<comment type="similarity">
    <text evidence="3">Belongs to the monovalent cation:proton antiporter 1 (CPA1) transporter (TC 2.A.36) family.</text>
</comment>
<comment type="sequence caution" evidence="3">
    <conflict type="erroneous gene model prediction">
        <sequence resource="EMBL-CDS" id="AAF63173"/>
    </conflict>
</comment>
<comment type="sequence caution" evidence="3">
    <conflict type="erroneous gene model prediction">
        <sequence resource="EMBL-CDS" id="AAF79251"/>
    </conflict>
</comment>
<gene>
    <name type="primary">NHX8</name>
    <name type="synonym">SOS1B</name>
    <name type="ordered locus">At1g14660</name>
    <name type="ORF">F10B6.1</name>
    <name type="ORF">T5E21.14</name>
</gene>
<dbReference type="EMBL" id="DQ104324">
    <property type="protein sequence ID" value="AAZ76246.1"/>
    <property type="molecule type" value="mRNA"/>
</dbReference>
<dbReference type="EMBL" id="AC006917">
    <property type="protein sequence ID" value="AAF79251.1"/>
    <property type="status" value="ALT_SEQ"/>
    <property type="molecule type" value="Genomic_DNA"/>
</dbReference>
<dbReference type="EMBL" id="AC010657">
    <property type="protein sequence ID" value="AAF63173.1"/>
    <property type="status" value="ALT_SEQ"/>
    <property type="molecule type" value="Genomic_DNA"/>
</dbReference>
<dbReference type="EMBL" id="CP002684">
    <property type="protein sequence ID" value="AEE29198.1"/>
    <property type="molecule type" value="Genomic_DNA"/>
</dbReference>
<dbReference type="RefSeq" id="NP_172918.2">
    <molecule id="Q3YL57-1"/>
    <property type="nucleotide sequence ID" value="NM_101333.5"/>
</dbReference>
<dbReference type="SMR" id="Q3YL57"/>
<dbReference type="BioGRID" id="23268">
    <property type="interactions" value="7"/>
</dbReference>
<dbReference type="FunCoup" id="Q3YL57">
    <property type="interactions" value="4"/>
</dbReference>
<dbReference type="IntAct" id="Q3YL57">
    <property type="interactions" value="7"/>
</dbReference>
<dbReference type="STRING" id="3702.Q3YL57"/>
<dbReference type="TCDB" id="2.A.36.7.3">
    <property type="family name" value="the monovalent cation:proton antiporter-1 (cpa1) family"/>
</dbReference>
<dbReference type="GlyCosmos" id="Q3YL57">
    <property type="glycosylation" value="1 site, No reported glycans"/>
</dbReference>
<dbReference type="GlyGen" id="Q3YL57">
    <property type="glycosylation" value="1 site"/>
</dbReference>
<dbReference type="iPTMnet" id="Q3YL57"/>
<dbReference type="PaxDb" id="3702-AT1G14660.1"/>
<dbReference type="ProteomicsDB" id="249391">
    <molecule id="Q3YL57-1"/>
</dbReference>
<dbReference type="EnsemblPlants" id="AT1G14660.1">
    <molecule id="Q3YL57-1"/>
    <property type="protein sequence ID" value="AT1G14660.1"/>
    <property type="gene ID" value="AT1G14660"/>
</dbReference>
<dbReference type="GeneID" id="838028"/>
<dbReference type="Gramene" id="AT1G14660.1">
    <molecule id="Q3YL57-1"/>
    <property type="protein sequence ID" value="AT1G14660.1"/>
    <property type="gene ID" value="AT1G14660"/>
</dbReference>
<dbReference type="KEGG" id="ath:AT1G14660"/>
<dbReference type="Araport" id="AT1G14660"/>
<dbReference type="TAIR" id="AT1G14660">
    <property type="gene designation" value="NHX8"/>
</dbReference>
<dbReference type="eggNOG" id="KOG1965">
    <property type="taxonomic scope" value="Eukaryota"/>
</dbReference>
<dbReference type="HOGENOM" id="CLU_005912_8_0_1"/>
<dbReference type="InParanoid" id="Q3YL57"/>
<dbReference type="OMA" id="KRTSMMD"/>
<dbReference type="OrthoDB" id="441412at2759"/>
<dbReference type="PhylomeDB" id="Q3YL57"/>
<dbReference type="PRO" id="PR:Q3YL57"/>
<dbReference type="Proteomes" id="UP000006548">
    <property type="component" value="Chromosome 1"/>
</dbReference>
<dbReference type="ExpressionAtlas" id="Q3YL57">
    <property type="expression patterns" value="baseline and differential"/>
</dbReference>
<dbReference type="GO" id="GO:0005886">
    <property type="term" value="C:plasma membrane"/>
    <property type="evidence" value="ECO:0000314"/>
    <property type="project" value="TAIR"/>
</dbReference>
<dbReference type="GO" id="GO:0015385">
    <property type="term" value="F:sodium:proton antiporter activity"/>
    <property type="evidence" value="ECO:0007669"/>
    <property type="project" value="InterPro"/>
</dbReference>
<dbReference type="GO" id="GO:0010352">
    <property type="term" value="P:lithium ion export across the plasma membrane"/>
    <property type="evidence" value="ECO:0000315"/>
    <property type="project" value="TAIR"/>
</dbReference>
<dbReference type="GO" id="GO:0006813">
    <property type="term" value="P:potassium ion transport"/>
    <property type="evidence" value="ECO:0007669"/>
    <property type="project" value="UniProtKB-KW"/>
</dbReference>
<dbReference type="Gene3D" id="6.10.140.1330">
    <property type="match status" value="1"/>
</dbReference>
<dbReference type="InterPro" id="IPR018422">
    <property type="entry name" value="Cation/H_exchanger_CPA1"/>
</dbReference>
<dbReference type="InterPro" id="IPR006153">
    <property type="entry name" value="Cation/H_exchanger_TM"/>
</dbReference>
<dbReference type="PANTHER" id="PTHR10110">
    <property type="entry name" value="SODIUM/HYDROGEN EXCHANGER"/>
    <property type="match status" value="1"/>
</dbReference>
<dbReference type="PANTHER" id="PTHR10110:SF165">
    <property type="entry name" value="SODIUM_HYDROGEN EXCHANGER 8"/>
    <property type="match status" value="1"/>
</dbReference>
<dbReference type="Pfam" id="PF00999">
    <property type="entry name" value="Na_H_Exchanger"/>
    <property type="match status" value="1"/>
</dbReference>
<keyword id="KW-0025">Alternative splicing</keyword>
<keyword id="KW-0050">Antiport</keyword>
<keyword id="KW-1003">Cell membrane</keyword>
<keyword id="KW-0325">Glycoprotein</keyword>
<keyword id="KW-0406">Ion transport</keyword>
<keyword id="KW-0472">Membrane</keyword>
<keyword id="KW-0630">Potassium</keyword>
<keyword id="KW-0633">Potassium transport</keyword>
<keyword id="KW-1185">Reference proteome</keyword>
<keyword id="KW-0915">Sodium</keyword>
<keyword id="KW-0739">Sodium transport</keyword>
<keyword id="KW-0812">Transmembrane</keyword>
<keyword id="KW-1133">Transmembrane helix</keyword>
<keyword id="KW-0813">Transport</keyword>